<proteinExistence type="inferred from homology"/>
<accession>Q7VZG1</accession>
<dbReference type="EC" id="2.7.4.25" evidence="1"/>
<dbReference type="EMBL" id="BX640413">
    <property type="protein sequence ID" value="CAE41251.1"/>
    <property type="molecule type" value="Genomic_DNA"/>
</dbReference>
<dbReference type="RefSeq" id="NP_879750.1">
    <property type="nucleotide sequence ID" value="NC_002929.2"/>
</dbReference>
<dbReference type="RefSeq" id="WP_010930100.1">
    <property type="nucleotide sequence ID" value="NZ_CP039022.1"/>
</dbReference>
<dbReference type="SMR" id="Q7VZG1"/>
<dbReference type="STRING" id="257313.BP0949"/>
<dbReference type="PaxDb" id="257313-BP0949"/>
<dbReference type="GeneID" id="69600875"/>
<dbReference type="KEGG" id="bpe:BP0949"/>
<dbReference type="PATRIC" id="fig|257313.5.peg.1013"/>
<dbReference type="eggNOG" id="COG0283">
    <property type="taxonomic scope" value="Bacteria"/>
</dbReference>
<dbReference type="HOGENOM" id="CLU_079959_2_0_4"/>
<dbReference type="Proteomes" id="UP000002676">
    <property type="component" value="Chromosome"/>
</dbReference>
<dbReference type="GO" id="GO:0005829">
    <property type="term" value="C:cytosol"/>
    <property type="evidence" value="ECO:0007669"/>
    <property type="project" value="TreeGrafter"/>
</dbReference>
<dbReference type="GO" id="GO:0005524">
    <property type="term" value="F:ATP binding"/>
    <property type="evidence" value="ECO:0007669"/>
    <property type="project" value="UniProtKB-UniRule"/>
</dbReference>
<dbReference type="GO" id="GO:0036430">
    <property type="term" value="F:CMP kinase activity"/>
    <property type="evidence" value="ECO:0007669"/>
    <property type="project" value="RHEA"/>
</dbReference>
<dbReference type="GO" id="GO:0036431">
    <property type="term" value="F:dCMP kinase activity"/>
    <property type="evidence" value="ECO:0007669"/>
    <property type="project" value="RHEA"/>
</dbReference>
<dbReference type="GO" id="GO:0015949">
    <property type="term" value="P:nucleobase-containing small molecule interconversion"/>
    <property type="evidence" value="ECO:0007669"/>
    <property type="project" value="TreeGrafter"/>
</dbReference>
<dbReference type="GO" id="GO:0006220">
    <property type="term" value="P:pyrimidine nucleotide metabolic process"/>
    <property type="evidence" value="ECO:0007669"/>
    <property type="project" value="UniProtKB-UniRule"/>
</dbReference>
<dbReference type="CDD" id="cd02020">
    <property type="entry name" value="CMPK"/>
    <property type="match status" value="1"/>
</dbReference>
<dbReference type="Gene3D" id="3.40.50.300">
    <property type="entry name" value="P-loop containing nucleotide triphosphate hydrolases"/>
    <property type="match status" value="1"/>
</dbReference>
<dbReference type="HAMAP" id="MF_00238">
    <property type="entry name" value="Cytidyl_kinase_type1"/>
    <property type="match status" value="1"/>
</dbReference>
<dbReference type="InterPro" id="IPR003136">
    <property type="entry name" value="Cytidylate_kin"/>
</dbReference>
<dbReference type="InterPro" id="IPR011994">
    <property type="entry name" value="Cytidylate_kinase_dom"/>
</dbReference>
<dbReference type="InterPro" id="IPR027417">
    <property type="entry name" value="P-loop_NTPase"/>
</dbReference>
<dbReference type="NCBIfam" id="TIGR00017">
    <property type="entry name" value="cmk"/>
    <property type="match status" value="1"/>
</dbReference>
<dbReference type="PANTHER" id="PTHR21299:SF2">
    <property type="entry name" value="CYTIDYLATE KINASE"/>
    <property type="match status" value="1"/>
</dbReference>
<dbReference type="PANTHER" id="PTHR21299">
    <property type="entry name" value="CYTIDYLATE KINASE/PANTOATE-BETA-ALANINE LIGASE"/>
    <property type="match status" value="1"/>
</dbReference>
<dbReference type="Pfam" id="PF02224">
    <property type="entry name" value="Cytidylate_kin"/>
    <property type="match status" value="1"/>
</dbReference>
<dbReference type="SUPFAM" id="SSF52540">
    <property type="entry name" value="P-loop containing nucleoside triphosphate hydrolases"/>
    <property type="match status" value="1"/>
</dbReference>
<sequence>MAIFASAGAAPVITIDGPTASGKGTIAHRVAKQLGWDVLDSGALYRLTALAALRRGLPATDEPAVAAVAQALDVRFDGPHVYLEGRDAGHEIRQEEVGNYASRIAAYPGVRQALLERQRAFRQPPGLVADGRDMGAVVFPDASLKIFLVADVEARAQRRCKQLIEKGISANLDDLLRDMRERDARDTQRAVAPLAPAADAHVLDSSGLTIEQTVQAVLDFWCA</sequence>
<name>KCY_BORPE</name>
<evidence type="ECO:0000255" key="1">
    <source>
        <dbReference type="HAMAP-Rule" id="MF_00238"/>
    </source>
</evidence>
<keyword id="KW-0067">ATP-binding</keyword>
<keyword id="KW-0963">Cytoplasm</keyword>
<keyword id="KW-0418">Kinase</keyword>
<keyword id="KW-0547">Nucleotide-binding</keyword>
<keyword id="KW-1185">Reference proteome</keyword>
<keyword id="KW-0808">Transferase</keyword>
<gene>
    <name evidence="1" type="primary">cmk</name>
    <name type="ordered locus">BP0949</name>
</gene>
<organism>
    <name type="scientific">Bordetella pertussis (strain Tohama I / ATCC BAA-589 / NCTC 13251)</name>
    <dbReference type="NCBI Taxonomy" id="257313"/>
    <lineage>
        <taxon>Bacteria</taxon>
        <taxon>Pseudomonadati</taxon>
        <taxon>Pseudomonadota</taxon>
        <taxon>Betaproteobacteria</taxon>
        <taxon>Burkholderiales</taxon>
        <taxon>Alcaligenaceae</taxon>
        <taxon>Bordetella</taxon>
    </lineage>
</organism>
<feature type="chain" id="PRO_0000131889" description="Cytidylate kinase">
    <location>
        <begin position="1"/>
        <end position="223"/>
    </location>
</feature>
<feature type="binding site" evidence="1">
    <location>
        <begin position="17"/>
        <end position="25"/>
    </location>
    <ligand>
        <name>ATP</name>
        <dbReference type="ChEBI" id="CHEBI:30616"/>
    </ligand>
</feature>
<protein>
    <recommendedName>
        <fullName evidence="1">Cytidylate kinase</fullName>
        <shortName evidence="1">CK</shortName>
        <ecNumber evidence="1">2.7.4.25</ecNumber>
    </recommendedName>
    <alternativeName>
        <fullName evidence="1">Cytidine monophosphate kinase</fullName>
        <shortName evidence="1">CMP kinase</shortName>
    </alternativeName>
</protein>
<comment type="catalytic activity">
    <reaction evidence="1">
        <text>CMP + ATP = CDP + ADP</text>
        <dbReference type="Rhea" id="RHEA:11600"/>
        <dbReference type="ChEBI" id="CHEBI:30616"/>
        <dbReference type="ChEBI" id="CHEBI:58069"/>
        <dbReference type="ChEBI" id="CHEBI:60377"/>
        <dbReference type="ChEBI" id="CHEBI:456216"/>
        <dbReference type="EC" id="2.7.4.25"/>
    </reaction>
</comment>
<comment type="catalytic activity">
    <reaction evidence="1">
        <text>dCMP + ATP = dCDP + ADP</text>
        <dbReference type="Rhea" id="RHEA:25094"/>
        <dbReference type="ChEBI" id="CHEBI:30616"/>
        <dbReference type="ChEBI" id="CHEBI:57566"/>
        <dbReference type="ChEBI" id="CHEBI:58593"/>
        <dbReference type="ChEBI" id="CHEBI:456216"/>
        <dbReference type="EC" id="2.7.4.25"/>
    </reaction>
</comment>
<comment type="subcellular location">
    <subcellularLocation>
        <location evidence="1">Cytoplasm</location>
    </subcellularLocation>
</comment>
<comment type="similarity">
    <text evidence="1">Belongs to the cytidylate kinase family. Type 1 subfamily.</text>
</comment>
<reference key="1">
    <citation type="journal article" date="2003" name="Nat. Genet.">
        <title>Comparative analysis of the genome sequences of Bordetella pertussis, Bordetella parapertussis and Bordetella bronchiseptica.</title>
        <authorList>
            <person name="Parkhill J."/>
            <person name="Sebaihia M."/>
            <person name="Preston A."/>
            <person name="Murphy L.D."/>
            <person name="Thomson N.R."/>
            <person name="Harris D.E."/>
            <person name="Holden M.T.G."/>
            <person name="Churcher C.M."/>
            <person name="Bentley S.D."/>
            <person name="Mungall K.L."/>
            <person name="Cerdeno-Tarraga A.-M."/>
            <person name="Temple L."/>
            <person name="James K.D."/>
            <person name="Harris B."/>
            <person name="Quail M.A."/>
            <person name="Achtman M."/>
            <person name="Atkin R."/>
            <person name="Baker S."/>
            <person name="Basham D."/>
            <person name="Bason N."/>
            <person name="Cherevach I."/>
            <person name="Chillingworth T."/>
            <person name="Collins M."/>
            <person name="Cronin A."/>
            <person name="Davis P."/>
            <person name="Doggett J."/>
            <person name="Feltwell T."/>
            <person name="Goble A."/>
            <person name="Hamlin N."/>
            <person name="Hauser H."/>
            <person name="Holroyd S."/>
            <person name="Jagels K."/>
            <person name="Leather S."/>
            <person name="Moule S."/>
            <person name="Norberczak H."/>
            <person name="O'Neil S."/>
            <person name="Ormond D."/>
            <person name="Price C."/>
            <person name="Rabbinowitsch E."/>
            <person name="Rutter S."/>
            <person name="Sanders M."/>
            <person name="Saunders D."/>
            <person name="Seeger K."/>
            <person name="Sharp S."/>
            <person name="Simmonds M."/>
            <person name="Skelton J."/>
            <person name="Squares R."/>
            <person name="Squares S."/>
            <person name="Stevens K."/>
            <person name="Unwin L."/>
            <person name="Whitehead S."/>
            <person name="Barrell B.G."/>
            <person name="Maskell D.J."/>
        </authorList>
    </citation>
    <scope>NUCLEOTIDE SEQUENCE [LARGE SCALE GENOMIC DNA]</scope>
    <source>
        <strain>Tohama I / ATCC BAA-589 / NCTC 13251</strain>
    </source>
</reference>